<organism>
    <name type="scientific">Dechloromonas aromatica (strain RCB)</name>
    <dbReference type="NCBI Taxonomy" id="159087"/>
    <lineage>
        <taxon>Bacteria</taxon>
        <taxon>Pseudomonadati</taxon>
        <taxon>Pseudomonadota</taxon>
        <taxon>Betaproteobacteria</taxon>
        <taxon>Rhodocyclales</taxon>
        <taxon>Azonexaceae</taxon>
        <taxon>Dechloromonas</taxon>
    </lineage>
</organism>
<reference key="1">
    <citation type="journal article" date="2009" name="BMC Genomics">
        <title>Metabolic analysis of the soil microbe Dechloromonas aromatica str. RCB: indications of a surprisingly complex life-style and cryptic anaerobic pathways for aromatic degradation.</title>
        <authorList>
            <person name="Salinero K.K."/>
            <person name="Keller K."/>
            <person name="Feil W.S."/>
            <person name="Feil H."/>
            <person name="Trong S."/>
            <person name="Di Bartolo G."/>
            <person name="Lapidus A."/>
        </authorList>
    </citation>
    <scope>NUCLEOTIDE SEQUENCE [LARGE SCALE GENOMIC DNA]</scope>
    <source>
        <strain>RCB</strain>
    </source>
</reference>
<comment type="function">
    <text evidence="1">Catalyzes the pyruvoyl-dependent decarboxylation of aspartate to produce beta-alanine.</text>
</comment>
<comment type="catalytic activity">
    <reaction evidence="1">
        <text>L-aspartate + H(+) = beta-alanine + CO2</text>
        <dbReference type="Rhea" id="RHEA:19497"/>
        <dbReference type="ChEBI" id="CHEBI:15378"/>
        <dbReference type="ChEBI" id="CHEBI:16526"/>
        <dbReference type="ChEBI" id="CHEBI:29991"/>
        <dbReference type="ChEBI" id="CHEBI:57966"/>
        <dbReference type="EC" id="4.1.1.11"/>
    </reaction>
</comment>
<comment type="cofactor">
    <cofactor evidence="1">
        <name>pyruvate</name>
        <dbReference type="ChEBI" id="CHEBI:15361"/>
    </cofactor>
    <text evidence="1">Binds 1 pyruvoyl group covalently per subunit.</text>
</comment>
<comment type="pathway">
    <text evidence="1">Cofactor biosynthesis; (R)-pantothenate biosynthesis; beta-alanine from L-aspartate: step 1/1.</text>
</comment>
<comment type="subunit">
    <text evidence="1">Heterooctamer of four alpha and four beta subunits.</text>
</comment>
<comment type="subcellular location">
    <subcellularLocation>
        <location evidence="1">Cytoplasm</location>
    </subcellularLocation>
</comment>
<comment type="PTM">
    <text evidence="1">Is synthesized initially as an inactive proenzyme, which is activated by self-cleavage at a specific serine bond to produce a beta-subunit with a hydroxyl group at its C-terminus and an alpha-subunit with a pyruvoyl group at its N-terminus.</text>
</comment>
<comment type="similarity">
    <text evidence="1">Belongs to the PanD family.</text>
</comment>
<gene>
    <name evidence="1" type="primary">panD</name>
    <name type="ordered locus">Daro_3187</name>
</gene>
<accession>Q47B64</accession>
<keyword id="KW-0068">Autocatalytic cleavage</keyword>
<keyword id="KW-0963">Cytoplasm</keyword>
<keyword id="KW-0210">Decarboxylase</keyword>
<keyword id="KW-0456">Lyase</keyword>
<keyword id="KW-0566">Pantothenate biosynthesis</keyword>
<keyword id="KW-0670">Pyruvate</keyword>
<keyword id="KW-0704">Schiff base</keyword>
<keyword id="KW-0865">Zymogen</keyword>
<feature type="chain" id="PRO_0000236865" description="Aspartate 1-decarboxylase beta chain" evidence="1">
    <location>
        <begin position="1"/>
        <end position="24"/>
    </location>
</feature>
<feature type="chain" id="PRO_0000236866" description="Aspartate 1-decarboxylase alpha chain" evidence="1">
    <location>
        <begin position="25"/>
        <end position="127"/>
    </location>
</feature>
<feature type="active site" description="Schiff-base intermediate with substrate; via pyruvic acid" evidence="1">
    <location>
        <position position="25"/>
    </location>
</feature>
<feature type="active site" description="Proton donor" evidence="1">
    <location>
        <position position="58"/>
    </location>
</feature>
<feature type="binding site" evidence="1">
    <location>
        <position position="57"/>
    </location>
    <ligand>
        <name>substrate</name>
    </ligand>
</feature>
<feature type="binding site" evidence="1">
    <location>
        <begin position="73"/>
        <end position="75"/>
    </location>
    <ligand>
        <name>substrate</name>
    </ligand>
</feature>
<feature type="modified residue" description="Pyruvic acid (Ser)" evidence="1">
    <location>
        <position position="25"/>
    </location>
</feature>
<sequence>MQRTMLKSKLHRVTATHADLHYEGSCAIDEDLLEAANIKEYEQIDIWNVNNGERFTTYAIRAERGSGVISVNGSAARRAAPGDILIIATFAVYNEVELAKHEPDLIYVDTQNRIVRRGHKIPVQAAA</sequence>
<name>PAND_DECAR</name>
<proteinExistence type="inferred from homology"/>
<evidence type="ECO:0000255" key="1">
    <source>
        <dbReference type="HAMAP-Rule" id="MF_00446"/>
    </source>
</evidence>
<dbReference type="EC" id="4.1.1.11" evidence="1"/>
<dbReference type="EMBL" id="CP000089">
    <property type="protein sequence ID" value="AAZ47917.1"/>
    <property type="molecule type" value="Genomic_DNA"/>
</dbReference>
<dbReference type="SMR" id="Q47B64"/>
<dbReference type="STRING" id="159087.Daro_3187"/>
<dbReference type="KEGG" id="dar:Daro_3187"/>
<dbReference type="eggNOG" id="COG0853">
    <property type="taxonomic scope" value="Bacteria"/>
</dbReference>
<dbReference type="HOGENOM" id="CLU_115305_2_1_4"/>
<dbReference type="OrthoDB" id="9803983at2"/>
<dbReference type="UniPathway" id="UPA00028">
    <property type="reaction ID" value="UER00002"/>
</dbReference>
<dbReference type="GO" id="GO:0005829">
    <property type="term" value="C:cytosol"/>
    <property type="evidence" value="ECO:0007669"/>
    <property type="project" value="TreeGrafter"/>
</dbReference>
<dbReference type="GO" id="GO:0004068">
    <property type="term" value="F:aspartate 1-decarboxylase activity"/>
    <property type="evidence" value="ECO:0007669"/>
    <property type="project" value="UniProtKB-UniRule"/>
</dbReference>
<dbReference type="GO" id="GO:0006523">
    <property type="term" value="P:alanine biosynthetic process"/>
    <property type="evidence" value="ECO:0007669"/>
    <property type="project" value="InterPro"/>
</dbReference>
<dbReference type="GO" id="GO:0015940">
    <property type="term" value="P:pantothenate biosynthetic process"/>
    <property type="evidence" value="ECO:0007669"/>
    <property type="project" value="UniProtKB-UniRule"/>
</dbReference>
<dbReference type="CDD" id="cd06919">
    <property type="entry name" value="Asp_decarbox"/>
    <property type="match status" value="1"/>
</dbReference>
<dbReference type="Gene3D" id="2.40.40.20">
    <property type="match status" value="1"/>
</dbReference>
<dbReference type="HAMAP" id="MF_00446">
    <property type="entry name" value="PanD"/>
    <property type="match status" value="1"/>
</dbReference>
<dbReference type="InterPro" id="IPR009010">
    <property type="entry name" value="Asp_de-COase-like_dom_sf"/>
</dbReference>
<dbReference type="InterPro" id="IPR003190">
    <property type="entry name" value="Asp_decarbox"/>
</dbReference>
<dbReference type="NCBIfam" id="TIGR00223">
    <property type="entry name" value="panD"/>
    <property type="match status" value="1"/>
</dbReference>
<dbReference type="PANTHER" id="PTHR21012">
    <property type="entry name" value="ASPARTATE 1-DECARBOXYLASE"/>
    <property type="match status" value="1"/>
</dbReference>
<dbReference type="PANTHER" id="PTHR21012:SF0">
    <property type="entry name" value="ASPARTATE 1-DECARBOXYLASE"/>
    <property type="match status" value="1"/>
</dbReference>
<dbReference type="Pfam" id="PF02261">
    <property type="entry name" value="Asp_decarbox"/>
    <property type="match status" value="1"/>
</dbReference>
<dbReference type="PIRSF" id="PIRSF006246">
    <property type="entry name" value="Asp_decarbox"/>
    <property type="match status" value="1"/>
</dbReference>
<dbReference type="SUPFAM" id="SSF50692">
    <property type="entry name" value="ADC-like"/>
    <property type="match status" value="1"/>
</dbReference>
<protein>
    <recommendedName>
        <fullName evidence="1">Aspartate 1-decarboxylase</fullName>
        <ecNumber evidence="1">4.1.1.11</ecNumber>
    </recommendedName>
    <alternativeName>
        <fullName evidence="1">Aspartate alpha-decarboxylase</fullName>
    </alternativeName>
    <component>
        <recommendedName>
            <fullName evidence="1">Aspartate 1-decarboxylase beta chain</fullName>
        </recommendedName>
    </component>
    <component>
        <recommendedName>
            <fullName evidence="1">Aspartate 1-decarboxylase alpha chain</fullName>
        </recommendedName>
    </component>
</protein>